<gene>
    <name type="primary">tollip</name>
</gene>
<accession>C1BZR1</accession>
<protein>
    <recommendedName>
        <fullName>Toll-interacting protein</fullName>
    </recommendedName>
</protein>
<comment type="function">
    <text evidence="1 2">Component of the signaling pathway of IL-1 and Toll-like receptors. Inhibits cell activation by microbial products. Connects the ubiquitin pathway to autophagy by functioning as a ubiquitin-ATG8 family adapter and thus mediating autophagic clearance of ubiquitin conjugates. The TOLLIP-dependent selective autophagy pathway plays an important role in clearance of cytotoxic polyQ proteins aggregates (By similarity). In a complex with TOM1, recruits ubiquitin-conjugated proteins onto early endosomes (By similarity). Binds to phosphatidylinositol 3-phosphate (PtdIns(3)P) (By similarity).</text>
</comment>
<comment type="subunit">
    <text evidence="2">Interacts with ATG8 family proteins (via AIM motifs), and ubiquitin (via CUE domain). Found in a complex with TOM1; interacts (via N-terminus) with TOM1 (via GAT domain); the interactions leads to TOM1-recruitment to endosomes and inhibition of TOLLIP binding to PtdIns(3)P (By similarity).</text>
</comment>
<comment type="subcellular location">
    <subcellularLocation>
        <location evidence="2">Cytoplasm</location>
    </subcellularLocation>
    <subcellularLocation>
        <location evidence="2">Endosome</location>
    </subcellularLocation>
    <subcellularLocation>
        <location evidence="2">Early endosome</location>
    </subcellularLocation>
    <text evidence="2">Localized to endo/exosomal vesicles.</text>
</comment>
<comment type="domain">
    <text evidence="2">Both ATG8-interaction motifs (AIM1 and AIM2) are required for the association with ATG8 family proteins.</text>
</comment>
<comment type="domain">
    <text evidence="2">The N-terminal TOM1-binding domain (residues 1-53) is a disordered domain that partially folds when bound to the GAT domain of TOM1.</text>
</comment>
<comment type="similarity">
    <text evidence="5">Belongs to the tollip family.</text>
</comment>
<sequence>MATTISTQRGQVYIGELPQDFLRITPTQQQQQVQLDAQAAQQLQYGGSLGTVGRLSITVVQAKLAKNYGMTRMDPYCRVRLGYAVYETPTAHNGAKNPRWNKVIQCTVPPGVGSFYLEIFDERAFSMDDRIAWTHVTIPEGLREGSVVDEWYSLSDRQGDDKEGMINLVMSFANMPAGMHMSPPVVLMPTVYQQGVGYIPIAGVPTAYSPGMVPMGMPAAPTVTPQEAPCSEEDLKALQDMFPNLDREVIRTVIEAQQGNKDAAINSLLQMTEEL</sequence>
<organism>
    <name type="scientific">Esox lucius</name>
    <name type="common">Northern pike</name>
    <dbReference type="NCBI Taxonomy" id="8010"/>
    <lineage>
        <taxon>Eukaryota</taxon>
        <taxon>Metazoa</taxon>
        <taxon>Chordata</taxon>
        <taxon>Craniata</taxon>
        <taxon>Vertebrata</taxon>
        <taxon>Euteleostomi</taxon>
        <taxon>Actinopterygii</taxon>
        <taxon>Neopterygii</taxon>
        <taxon>Teleostei</taxon>
        <taxon>Protacanthopterygii</taxon>
        <taxon>Esociformes</taxon>
        <taxon>Esocidae</taxon>
        <taxon>Esox</taxon>
    </lineage>
</organism>
<feature type="chain" id="PRO_0000384935" description="Toll-interacting protein">
    <location>
        <begin position="1"/>
        <end position="275"/>
    </location>
</feature>
<feature type="domain" description="C2" evidence="3">
    <location>
        <begin position="35"/>
        <end position="152"/>
    </location>
</feature>
<feature type="domain" description="CUE" evidence="4">
    <location>
        <begin position="230"/>
        <end position="273"/>
    </location>
</feature>
<feature type="short sequence motif" description="AIM1">
    <location>
        <begin position="133"/>
        <end position="136"/>
    </location>
</feature>
<feature type="short sequence motif" description="AIM2">
    <location>
        <begin position="151"/>
        <end position="154"/>
    </location>
</feature>
<evidence type="ECO:0000250" key="1"/>
<evidence type="ECO:0000250" key="2">
    <source>
        <dbReference type="UniProtKB" id="Q9H0E2"/>
    </source>
</evidence>
<evidence type="ECO:0000255" key="3">
    <source>
        <dbReference type="PROSITE-ProRule" id="PRU00041"/>
    </source>
</evidence>
<evidence type="ECO:0000255" key="4">
    <source>
        <dbReference type="PROSITE-ProRule" id="PRU00468"/>
    </source>
</evidence>
<evidence type="ECO:0000305" key="5"/>
<reference key="1">
    <citation type="journal article" date="2010" name="BMC Genomics">
        <title>Salmo salar and Esox lucius full-length cDNA sequences reveal changes in evolutionary pressures on a post-tetraploidization genome.</title>
        <authorList>
            <person name="Leong J.S."/>
            <person name="Jantzen S.G."/>
            <person name="von Schalburg K.R."/>
            <person name="Cooper G.A."/>
            <person name="Messmer A.M."/>
            <person name="Liao N.Y."/>
            <person name="Munro S."/>
            <person name="Moore R."/>
            <person name="Holt R.A."/>
            <person name="Jones S.J."/>
            <person name="Davidson W.S."/>
            <person name="Koop B.F."/>
        </authorList>
    </citation>
    <scope>NUCLEOTIDE SEQUENCE [LARGE SCALE MRNA]</scope>
</reference>
<keyword id="KW-0072">Autophagy</keyword>
<keyword id="KW-0963">Cytoplasm</keyword>
<keyword id="KW-0967">Endosome</keyword>
<keyword id="KW-0391">Immunity</keyword>
<keyword id="KW-0395">Inflammatory response</keyword>
<keyword id="KW-0399">Innate immunity</keyword>
<keyword id="KW-1185">Reference proteome</keyword>
<keyword id="KW-0677">Repeat</keyword>
<dbReference type="EMBL" id="BT080090">
    <property type="protein sequence ID" value="ACO14514.1"/>
    <property type="molecule type" value="mRNA"/>
</dbReference>
<dbReference type="RefSeq" id="NP_001290730.1">
    <property type="nucleotide sequence ID" value="NM_001303801.1"/>
</dbReference>
<dbReference type="SMR" id="C1BZR1"/>
<dbReference type="FunCoup" id="C1BZR1">
    <property type="interactions" value="1078"/>
</dbReference>
<dbReference type="STRING" id="8010.ENSELUP00000032287"/>
<dbReference type="GeneID" id="105027394"/>
<dbReference type="KEGG" id="els:105027394"/>
<dbReference type="CTD" id="54472"/>
<dbReference type="InParanoid" id="C1BZR1"/>
<dbReference type="OrthoDB" id="9942608at2759"/>
<dbReference type="Proteomes" id="UP000265140">
    <property type="component" value="Unassembled WGS sequence"/>
</dbReference>
<dbReference type="GO" id="GO:0005769">
    <property type="term" value="C:early endosome"/>
    <property type="evidence" value="ECO:0007669"/>
    <property type="project" value="UniProtKB-SubCell"/>
</dbReference>
<dbReference type="GO" id="GO:0043130">
    <property type="term" value="F:ubiquitin binding"/>
    <property type="evidence" value="ECO:0007669"/>
    <property type="project" value="InterPro"/>
</dbReference>
<dbReference type="GO" id="GO:0031624">
    <property type="term" value="F:ubiquitin conjugating enzyme binding"/>
    <property type="evidence" value="ECO:0007669"/>
    <property type="project" value="TreeGrafter"/>
</dbReference>
<dbReference type="GO" id="GO:0006914">
    <property type="term" value="P:autophagy"/>
    <property type="evidence" value="ECO:0007669"/>
    <property type="project" value="UniProtKB-KW"/>
</dbReference>
<dbReference type="GO" id="GO:0006954">
    <property type="term" value="P:inflammatory response"/>
    <property type="evidence" value="ECO:0007669"/>
    <property type="project" value="UniProtKB-KW"/>
</dbReference>
<dbReference type="GO" id="GO:0045087">
    <property type="term" value="P:innate immune response"/>
    <property type="evidence" value="ECO:0007669"/>
    <property type="project" value="UniProtKB-KW"/>
</dbReference>
<dbReference type="GO" id="GO:0016310">
    <property type="term" value="P:phosphorylation"/>
    <property type="evidence" value="ECO:0000250"/>
    <property type="project" value="UniProtKB"/>
</dbReference>
<dbReference type="GO" id="GO:0006511">
    <property type="term" value="P:ubiquitin-dependent protein catabolic process"/>
    <property type="evidence" value="ECO:0007669"/>
    <property type="project" value="TreeGrafter"/>
</dbReference>
<dbReference type="CDD" id="cd04016">
    <property type="entry name" value="C2_Tollip"/>
    <property type="match status" value="1"/>
</dbReference>
<dbReference type="CDD" id="cd14363">
    <property type="entry name" value="CUE_TOLIP"/>
    <property type="match status" value="1"/>
</dbReference>
<dbReference type="FunFam" id="1.10.8.10:FF:000036">
    <property type="entry name" value="Toll-interacting protein-like Protein"/>
    <property type="match status" value="1"/>
</dbReference>
<dbReference type="FunFam" id="2.60.40.150:FF:000055">
    <property type="entry name" value="Toll-interacting protein-like Protein"/>
    <property type="match status" value="1"/>
</dbReference>
<dbReference type="Gene3D" id="2.60.40.150">
    <property type="entry name" value="C2 domain"/>
    <property type="match status" value="1"/>
</dbReference>
<dbReference type="Gene3D" id="1.10.8.10">
    <property type="entry name" value="DNA helicase RuvA subunit, C-terminal domain"/>
    <property type="match status" value="1"/>
</dbReference>
<dbReference type="InterPro" id="IPR000008">
    <property type="entry name" value="C2_dom"/>
</dbReference>
<dbReference type="InterPro" id="IPR035892">
    <property type="entry name" value="C2_domain_sf"/>
</dbReference>
<dbReference type="InterPro" id="IPR003892">
    <property type="entry name" value="CUE"/>
</dbReference>
<dbReference type="InterPro" id="IPR041799">
    <property type="entry name" value="TOLIP_CUE"/>
</dbReference>
<dbReference type="InterPro" id="IPR037301">
    <property type="entry name" value="Tollip_C2"/>
</dbReference>
<dbReference type="InterPro" id="IPR009060">
    <property type="entry name" value="UBA-like_sf"/>
</dbReference>
<dbReference type="PANTHER" id="PTHR16461">
    <property type="entry name" value="TOLL-INTERACTING PROTEIN"/>
    <property type="match status" value="1"/>
</dbReference>
<dbReference type="PANTHER" id="PTHR16461:SF5">
    <property type="entry name" value="TOLL-INTERACTING PROTEIN"/>
    <property type="match status" value="1"/>
</dbReference>
<dbReference type="Pfam" id="PF00168">
    <property type="entry name" value="C2"/>
    <property type="match status" value="1"/>
</dbReference>
<dbReference type="Pfam" id="PF02845">
    <property type="entry name" value="CUE"/>
    <property type="match status" value="1"/>
</dbReference>
<dbReference type="SMART" id="SM00239">
    <property type="entry name" value="C2"/>
    <property type="match status" value="1"/>
</dbReference>
<dbReference type="SMART" id="SM00546">
    <property type="entry name" value="CUE"/>
    <property type="match status" value="1"/>
</dbReference>
<dbReference type="SUPFAM" id="SSF49562">
    <property type="entry name" value="C2 domain (Calcium/lipid-binding domain, CaLB)"/>
    <property type="match status" value="1"/>
</dbReference>
<dbReference type="SUPFAM" id="SSF46934">
    <property type="entry name" value="UBA-like"/>
    <property type="match status" value="1"/>
</dbReference>
<dbReference type="PROSITE" id="PS50004">
    <property type="entry name" value="C2"/>
    <property type="match status" value="1"/>
</dbReference>
<dbReference type="PROSITE" id="PS51140">
    <property type="entry name" value="CUE"/>
    <property type="match status" value="1"/>
</dbReference>
<proteinExistence type="evidence at transcript level"/>
<name>TOLIP_ESOLU</name>